<organism>
    <name type="scientific">Bacillus cereus (strain AH820)</name>
    <dbReference type="NCBI Taxonomy" id="405535"/>
    <lineage>
        <taxon>Bacteria</taxon>
        <taxon>Bacillati</taxon>
        <taxon>Bacillota</taxon>
        <taxon>Bacilli</taxon>
        <taxon>Bacillales</taxon>
        <taxon>Bacillaceae</taxon>
        <taxon>Bacillus</taxon>
        <taxon>Bacillus cereus group</taxon>
    </lineage>
</organism>
<sequence length="921" mass="104648">MEYKNTLLMPKTEFPMRGNLPKREPAMQEKWAEMNIYEKVQEHTKGRPLFVLHDGPPYANGDIHMGHALNKVLKDFIVRYKSMTGFCAPYVPGWDTHGLPIEQALTNKGVKRKEMTVAEFRKLCAEYAYEQVERQREQFKRLGVRADWDNPYITLEPAYEAQQIKVFGDMAKKGYIYKGQKPVYWSPTSESALAEAEIEYQDKKSASIYVAFPVKDGKNVLEGDEKYIIWTTTPWTLPANLGISVHPELEYAIVKVNDEKYIIASELFETVAKTLEWENAEVVKTVKGSELEYTVAKHPFYDRDSLVMLGDHVTTDAGTGCVHTAPGHGEDDFIVGKKYGLEVLCPVDDKGVLTEEAPGFEGLFYDKANKPITEKLEEVGALLKLTFITHSYPHDWRTKKPIIFRATAQWFASIEAFRKELLEAVAETKWVPAWGETRLHNMVRDRGDWCISRQRAWGVPIPVFYAENGDPIITDETINHVADLFREHGSNVWFEREAKDLLPEGFTHPGSPNGEFRKETDIMDVWFDSGSSHQAVLEERDDLQRPADLYLEGSDQYRGWFNSSLSTAVAVTGKAPYKGVLSHGFVLDGEGRKMSKSIGNIVVPKKIMDQLGGDILRLWVSSVDYQSDVRISDDILKQVAEVYRKIRNTFRFLLGNLDDFKPSENTVAVAELREVDRYMLVKLNDLITKVKEAYETYDFAAVYHAIHNFCTIDLSSFYLDFAKDILYIEGANHEDRRAIQTVLYDVLVALTKLVTPILPHTADEVWPYIPGVTEESVQLTDMPEAVQLDDAEALKTKWDAFMTLRDDVLKALEVARNEKVIGKSLNASITLYPTAEMKAMLESINEDLKQLFIVSEYKLGGMMEEAPADAPKYEHTAVVVAQATGETCERCWVVSETIGKDAEHETLCERCATVVKENYVK</sequence>
<dbReference type="EC" id="6.1.1.5" evidence="1"/>
<dbReference type="EMBL" id="CP001283">
    <property type="protein sequence ID" value="ACK89844.1"/>
    <property type="molecule type" value="Genomic_DNA"/>
</dbReference>
<dbReference type="SMR" id="B7JJY2"/>
<dbReference type="KEGG" id="bcu:BCAH820_3909"/>
<dbReference type="HOGENOM" id="CLU_001493_7_0_9"/>
<dbReference type="Proteomes" id="UP000001363">
    <property type="component" value="Chromosome"/>
</dbReference>
<dbReference type="GO" id="GO:0005829">
    <property type="term" value="C:cytosol"/>
    <property type="evidence" value="ECO:0007669"/>
    <property type="project" value="TreeGrafter"/>
</dbReference>
<dbReference type="GO" id="GO:0002161">
    <property type="term" value="F:aminoacyl-tRNA deacylase activity"/>
    <property type="evidence" value="ECO:0007669"/>
    <property type="project" value="InterPro"/>
</dbReference>
<dbReference type="GO" id="GO:0005524">
    <property type="term" value="F:ATP binding"/>
    <property type="evidence" value="ECO:0007669"/>
    <property type="project" value="UniProtKB-UniRule"/>
</dbReference>
<dbReference type="GO" id="GO:0004822">
    <property type="term" value="F:isoleucine-tRNA ligase activity"/>
    <property type="evidence" value="ECO:0007669"/>
    <property type="project" value="UniProtKB-UniRule"/>
</dbReference>
<dbReference type="GO" id="GO:0000049">
    <property type="term" value="F:tRNA binding"/>
    <property type="evidence" value="ECO:0007669"/>
    <property type="project" value="InterPro"/>
</dbReference>
<dbReference type="GO" id="GO:0008270">
    <property type="term" value="F:zinc ion binding"/>
    <property type="evidence" value="ECO:0007669"/>
    <property type="project" value="UniProtKB-UniRule"/>
</dbReference>
<dbReference type="GO" id="GO:0006428">
    <property type="term" value="P:isoleucyl-tRNA aminoacylation"/>
    <property type="evidence" value="ECO:0007669"/>
    <property type="project" value="UniProtKB-UniRule"/>
</dbReference>
<dbReference type="CDD" id="cd07960">
    <property type="entry name" value="Anticodon_Ia_Ile_BEm"/>
    <property type="match status" value="1"/>
</dbReference>
<dbReference type="CDD" id="cd00818">
    <property type="entry name" value="IleRS_core"/>
    <property type="match status" value="1"/>
</dbReference>
<dbReference type="FunFam" id="1.10.10.830:FF:000001">
    <property type="entry name" value="Isoleucine--tRNA ligase"/>
    <property type="match status" value="1"/>
</dbReference>
<dbReference type="FunFam" id="1.10.730.20:FF:000001">
    <property type="entry name" value="Isoleucine--tRNA ligase"/>
    <property type="match status" value="1"/>
</dbReference>
<dbReference type="FunFam" id="3.40.50.620:FF:000152">
    <property type="entry name" value="Isoleucine--tRNA ligase"/>
    <property type="match status" value="1"/>
</dbReference>
<dbReference type="FunFam" id="3.90.740.10:FF:000006">
    <property type="entry name" value="Isoleucine--tRNA ligase"/>
    <property type="match status" value="1"/>
</dbReference>
<dbReference type="Gene3D" id="1.10.730.20">
    <property type="match status" value="1"/>
</dbReference>
<dbReference type="Gene3D" id="3.40.50.620">
    <property type="entry name" value="HUPs"/>
    <property type="match status" value="2"/>
</dbReference>
<dbReference type="Gene3D" id="1.10.10.830">
    <property type="entry name" value="Ile-tRNA synthetase CP2 domain-like"/>
    <property type="match status" value="1"/>
</dbReference>
<dbReference type="Gene3D" id="3.90.740.10">
    <property type="entry name" value="Valyl/Leucyl/Isoleucyl-tRNA synthetase, editing domain"/>
    <property type="match status" value="1"/>
</dbReference>
<dbReference type="HAMAP" id="MF_02002">
    <property type="entry name" value="Ile_tRNA_synth_type1"/>
    <property type="match status" value="1"/>
</dbReference>
<dbReference type="InterPro" id="IPR001412">
    <property type="entry name" value="aa-tRNA-synth_I_CS"/>
</dbReference>
<dbReference type="InterPro" id="IPR002300">
    <property type="entry name" value="aa-tRNA-synth_Ia"/>
</dbReference>
<dbReference type="InterPro" id="IPR033708">
    <property type="entry name" value="Anticodon_Ile_BEm"/>
</dbReference>
<dbReference type="InterPro" id="IPR002301">
    <property type="entry name" value="Ile-tRNA-ligase"/>
</dbReference>
<dbReference type="InterPro" id="IPR023585">
    <property type="entry name" value="Ile-tRNA-ligase_type1"/>
</dbReference>
<dbReference type="InterPro" id="IPR050081">
    <property type="entry name" value="Ile-tRNA_ligase"/>
</dbReference>
<dbReference type="InterPro" id="IPR013155">
    <property type="entry name" value="M/V/L/I-tRNA-synth_anticd-bd"/>
</dbReference>
<dbReference type="InterPro" id="IPR014729">
    <property type="entry name" value="Rossmann-like_a/b/a_fold"/>
</dbReference>
<dbReference type="InterPro" id="IPR009080">
    <property type="entry name" value="tRNAsynth_Ia_anticodon-bd"/>
</dbReference>
<dbReference type="InterPro" id="IPR009008">
    <property type="entry name" value="Val/Leu/Ile-tRNA-synth_edit"/>
</dbReference>
<dbReference type="InterPro" id="IPR010663">
    <property type="entry name" value="Znf_FPG/IleRS"/>
</dbReference>
<dbReference type="NCBIfam" id="TIGR00392">
    <property type="entry name" value="ileS"/>
    <property type="match status" value="1"/>
</dbReference>
<dbReference type="PANTHER" id="PTHR42765:SF1">
    <property type="entry name" value="ISOLEUCINE--TRNA LIGASE, MITOCHONDRIAL"/>
    <property type="match status" value="1"/>
</dbReference>
<dbReference type="PANTHER" id="PTHR42765">
    <property type="entry name" value="SOLEUCYL-TRNA SYNTHETASE"/>
    <property type="match status" value="1"/>
</dbReference>
<dbReference type="Pfam" id="PF08264">
    <property type="entry name" value="Anticodon_1"/>
    <property type="match status" value="1"/>
</dbReference>
<dbReference type="Pfam" id="PF00133">
    <property type="entry name" value="tRNA-synt_1"/>
    <property type="match status" value="1"/>
</dbReference>
<dbReference type="Pfam" id="PF06827">
    <property type="entry name" value="zf-FPG_IleRS"/>
    <property type="match status" value="1"/>
</dbReference>
<dbReference type="PRINTS" id="PR00984">
    <property type="entry name" value="TRNASYNTHILE"/>
</dbReference>
<dbReference type="SUPFAM" id="SSF47323">
    <property type="entry name" value="Anticodon-binding domain of a subclass of class I aminoacyl-tRNA synthetases"/>
    <property type="match status" value="1"/>
</dbReference>
<dbReference type="SUPFAM" id="SSF52374">
    <property type="entry name" value="Nucleotidylyl transferase"/>
    <property type="match status" value="1"/>
</dbReference>
<dbReference type="SUPFAM" id="SSF50677">
    <property type="entry name" value="ValRS/IleRS/LeuRS editing domain"/>
    <property type="match status" value="1"/>
</dbReference>
<dbReference type="PROSITE" id="PS00178">
    <property type="entry name" value="AA_TRNA_LIGASE_I"/>
    <property type="match status" value="1"/>
</dbReference>
<comment type="function">
    <text evidence="1">Catalyzes the attachment of isoleucine to tRNA(Ile). As IleRS can inadvertently accommodate and process structurally similar amino acids such as valine, to avoid such errors it has two additional distinct tRNA(Ile)-dependent editing activities. One activity is designated as 'pretransfer' editing and involves the hydrolysis of activated Val-AMP. The other activity is designated 'posttransfer' editing and involves deacylation of mischarged Val-tRNA(Ile).</text>
</comment>
<comment type="catalytic activity">
    <reaction evidence="1">
        <text>tRNA(Ile) + L-isoleucine + ATP = L-isoleucyl-tRNA(Ile) + AMP + diphosphate</text>
        <dbReference type="Rhea" id="RHEA:11060"/>
        <dbReference type="Rhea" id="RHEA-COMP:9666"/>
        <dbReference type="Rhea" id="RHEA-COMP:9695"/>
        <dbReference type="ChEBI" id="CHEBI:30616"/>
        <dbReference type="ChEBI" id="CHEBI:33019"/>
        <dbReference type="ChEBI" id="CHEBI:58045"/>
        <dbReference type="ChEBI" id="CHEBI:78442"/>
        <dbReference type="ChEBI" id="CHEBI:78528"/>
        <dbReference type="ChEBI" id="CHEBI:456215"/>
        <dbReference type="EC" id="6.1.1.5"/>
    </reaction>
</comment>
<comment type="cofactor">
    <cofactor evidence="1">
        <name>Zn(2+)</name>
        <dbReference type="ChEBI" id="CHEBI:29105"/>
    </cofactor>
    <text evidence="1">Binds 1 zinc ion per subunit.</text>
</comment>
<comment type="subunit">
    <text evidence="1">Monomer.</text>
</comment>
<comment type="subcellular location">
    <subcellularLocation>
        <location evidence="1">Cytoplasm</location>
    </subcellularLocation>
</comment>
<comment type="domain">
    <text evidence="1">IleRS has two distinct active sites: one for aminoacylation and one for editing. The misactivated valine is translocated from the active site to the editing site, which sterically excludes the correctly activated isoleucine. The single editing site contains two valyl binding pockets, one specific for each substrate (Val-AMP or Val-tRNA(Ile)).</text>
</comment>
<comment type="similarity">
    <text evidence="1">Belongs to the class-I aminoacyl-tRNA synthetase family. IleS type 1 subfamily.</text>
</comment>
<reference key="1">
    <citation type="submission" date="2008-10" db="EMBL/GenBank/DDBJ databases">
        <title>Genome sequence of Bacillus cereus AH820.</title>
        <authorList>
            <person name="Dodson R.J."/>
            <person name="Durkin A.S."/>
            <person name="Rosovitz M.J."/>
            <person name="Rasko D.A."/>
            <person name="Hoffmaster A."/>
            <person name="Ravel J."/>
            <person name="Sutton G."/>
        </authorList>
    </citation>
    <scope>NUCLEOTIDE SEQUENCE [LARGE SCALE GENOMIC DNA]</scope>
    <source>
        <strain>AH820</strain>
    </source>
</reference>
<name>SYI_BACC0</name>
<evidence type="ECO:0000255" key="1">
    <source>
        <dbReference type="HAMAP-Rule" id="MF_02002"/>
    </source>
</evidence>
<feature type="chain" id="PRO_1000189123" description="Isoleucine--tRNA ligase">
    <location>
        <begin position="1"/>
        <end position="921"/>
    </location>
</feature>
<feature type="short sequence motif" description="'HIGH' region">
    <location>
        <begin position="57"/>
        <end position="67"/>
    </location>
</feature>
<feature type="short sequence motif" description="'KMSKS' region">
    <location>
        <begin position="593"/>
        <end position="597"/>
    </location>
</feature>
<feature type="binding site" evidence="1">
    <location>
        <position position="552"/>
    </location>
    <ligand>
        <name>L-isoleucyl-5'-AMP</name>
        <dbReference type="ChEBI" id="CHEBI:178002"/>
    </ligand>
</feature>
<feature type="binding site" evidence="1">
    <location>
        <position position="596"/>
    </location>
    <ligand>
        <name>ATP</name>
        <dbReference type="ChEBI" id="CHEBI:30616"/>
    </ligand>
</feature>
<feature type="binding site" evidence="1">
    <location>
        <position position="888"/>
    </location>
    <ligand>
        <name>Zn(2+)</name>
        <dbReference type="ChEBI" id="CHEBI:29105"/>
    </ligand>
</feature>
<feature type="binding site" evidence="1">
    <location>
        <position position="891"/>
    </location>
    <ligand>
        <name>Zn(2+)</name>
        <dbReference type="ChEBI" id="CHEBI:29105"/>
    </ligand>
</feature>
<feature type="binding site" evidence="1">
    <location>
        <position position="908"/>
    </location>
    <ligand>
        <name>Zn(2+)</name>
        <dbReference type="ChEBI" id="CHEBI:29105"/>
    </ligand>
</feature>
<feature type="binding site" evidence="1">
    <location>
        <position position="911"/>
    </location>
    <ligand>
        <name>Zn(2+)</name>
        <dbReference type="ChEBI" id="CHEBI:29105"/>
    </ligand>
</feature>
<accession>B7JJY2</accession>
<gene>
    <name evidence="1" type="primary">ileS</name>
    <name type="ordered locus">BCAH820_3909</name>
</gene>
<proteinExistence type="inferred from homology"/>
<protein>
    <recommendedName>
        <fullName evidence="1">Isoleucine--tRNA ligase</fullName>
        <ecNumber evidence="1">6.1.1.5</ecNumber>
    </recommendedName>
    <alternativeName>
        <fullName evidence="1">Isoleucyl-tRNA synthetase</fullName>
        <shortName evidence="1">IleRS</shortName>
    </alternativeName>
</protein>
<keyword id="KW-0030">Aminoacyl-tRNA synthetase</keyword>
<keyword id="KW-0067">ATP-binding</keyword>
<keyword id="KW-0963">Cytoplasm</keyword>
<keyword id="KW-0436">Ligase</keyword>
<keyword id="KW-0479">Metal-binding</keyword>
<keyword id="KW-0547">Nucleotide-binding</keyword>
<keyword id="KW-0648">Protein biosynthesis</keyword>
<keyword id="KW-0862">Zinc</keyword>